<feature type="chain" id="PRO_0000416538" description="Thiosulfate sulfurtransferase 18">
    <location>
        <begin position="1"/>
        <end position="136"/>
    </location>
</feature>
<feature type="domain" description="Rhodanese" evidence="1">
    <location>
        <begin position="26"/>
        <end position="128"/>
    </location>
</feature>
<feature type="active site" description="Cysteine persulfide intermediate" evidence="1">
    <location>
        <position position="88"/>
    </location>
</feature>
<feature type="sequence conflict" description="In Ref. 5; AAM64406." evidence="4" ref="5">
    <original>Q</original>
    <variation>R</variation>
    <location>
        <position position="68"/>
    </location>
</feature>
<feature type="sequence conflict" description="In Ref. 5; AAM64406." evidence="4" ref="5">
    <original>T</original>
    <variation>K</variation>
    <location>
        <position position="128"/>
    </location>
</feature>
<dbReference type="EC" id="2.8.1.1"/>
<dbReference type="EMBL" id="AB011474">
    <property type="protein sequence ID" value="BAB10422.1"/>
    <property type="molecule type" value="Genomic_DNA"/>
</dbReference>
<dbReference type="EMBL" id="CP002688">
    <property type="protein sequence ID" value="AED98170.1"/>
    <property type="molecule type" value="Genomic_DNA"/>
</dbReference>
<dbReference type="EMBL" id="AY065058">
    <property type="protein sequence ID" value="AAL57692.1"/>
    <property type="molecule type" value="mRNA"/>
</dbReference>
<dbReference type="EMBL" id="AY091669">
    <property type="protein sequence ID" value="AAM10268.1"/>
    <property type="molecule type" value="mRNA"/>
</dbReference>
<dbReference type="EMBL" id="AK222135">
    <property type="protein sequence ID" value="BAD95161.1"/>
    <property type="molecule type" value="mRNA"/>
</dbReference>
<dbReference type="EMBL" id="AY086338">
    <property type="protein sequence ID" value="AAM64406.1"/>
    <property type="molecule type" value="mRNA"/>
</dbReference>
<dbReference type="RefSeq" id="NP_001190631.1">
    <molecule id="Q9FKW8-1"/>
    <property type="nucleotide sequence ID" value="NM_001203702.1"/>
</dbReference>
<dbReference type="SMR" id="Q9FKW8"/>
<dbReference type="FunCoup" id="Q9FKW8">
    <property type="interactions" value="273"/>
</dbReference>
<dbReference type="STRING" id="3702.Q9FKW8"/>
<dbReference type="PaxDb" id="3702-AT5G66170.2"/>
<dbReference type="ProteomicsDB" id="228273">
    <molecule id="Q9FKW8-1"/>
</dbReference>
<dbReference type="EnsemblPlants" id="AT5G66170.3">
    <molecule id="Q9FKW8-1"/>
    <property type="protein sequence ID" value="AT5G66170.3"/>
    <property type="gene ID" value="AT5G66170"/>
</dbReference>
<dbReference type="GeneID" id="836749"/>
<dbReference type="Gramene" id="AT5G66170.3">
    <molecule id="Q9FKW8-1"/>
    <property type="protein sequence ID" value="AT5G66170.3"/>
    <property type="gene ID" value="AT5G66170"/>
</dbReference>
<dbReference type="KEGG" id="ath:AT5G66170"/>
<dbReference type="Araport" id="AT5G66170"/>
<dbReference type="TAIR" id="AT5G66170">
    <property type="gene designation" value="STR18"/>
</dbReference>
<dbReference type="eggNOG" id="KOG1530">
    <property type="taxonomic scope" value="Eukaryota"/>
</dbReference>
<dbReference type="InParanoid" id="Q9FKW8"/>
<dbReference type="OMA" id="CKKEDRI"/>
<dbReference type="BRENDA" id="2.8.1.1">
    <property type="organism ID" value="399"/>
</dbReference>
<dbReference type="SABIO-RK" id="Q9FKW8"/>
<dbReference type="PRO" id="PR:Q9FKW8"/>
<dbReference type="Proteomes" id="UP000006548">
    <property type="component" value="Chromosome 5"/>
</dbReference>
<dbReference type="ExpressionAtlas" id="Q9FKW8">
    <property type="expression patterns" value="baseline and differential"/>
</dbReference>
<dbReference type="GO" id="GO:0005737">
    <property type="term" value="C:cytoplasm"/>
    <property type="evidence" value="ECO:0000314"/>
    <property type="project" value="UniProtKB"/>
</dbReference>
<dbReference type="GO" id="GO:0004792">
    <property type="term" value="F:thiosulfate-cyanide sulfurtransferase activity"/>
    <property type="evidence" value="ECO:0000314"/>
    <property type="project" value="UniProtKB"/>
</dbReference>
<dbReference type="CDD" id="cd00158">
    <property type="entry name" value="RHOD"/>
    <property type="match status" value="1"/>
</dbReference>
<dbReference type="FunFam" id="3.40.250.10:FF:000062">
    <property type="entry name" value="Thiosulfate sulfurtransferase 16, chloroplastic"/>
    <property type="match status" value="1"/>
</dbReference>
<dbReference type="Gene3D" id="3.40.250.10">
    <property type="entry name" value="Rhodanese-like domain"/>
    <property type="match status" value="1"/>
</dbReference>
<dbReference type="InterPro" id="IPR001763">
    <property type="entry name" value="Rhodanese-like_dom"/>
</dbReference>
<dbReference type="InterPro" id="IPR036873">
    <property type="entry name" value="Rhodanese-like_dom_sf"/>
</dbReference>
<dbReference type="InterPro" id="IPR044684">
    <property type="entry name" value="STR17/STR18/HARC1-like"/>
</dbReference>
<dbReference type="PANTHER" id="PTHR44542">
    <property type="entry name" value="THIOSULFATE SULFURTRANSFERASE 18"/>
    <property type="match status" value="1"/>
</dbReference>
<dbReference type="PANTHER" id="PTHR44542:SF12">
    <property type="entry name" value="THIOSULFATE SULFURTRANSFERASE 18"/>
    <property type="match status" value="1"/>
</dbReference>
<dbReference type="Pfam" id="PF00581">
    <property type="entry name" value="Rhodanese"/>
    <property type="match status" value="1"/>
</dbReference>
<dbReference type="SMART" id="SM00450">
    <property type="entry name" value="RHOD"/>
    <property type="match status" value="1"/>
</dbReference>
<dbReference type="SUPFAM" id="SSF52821">
    <property type="entry name" value="Rhodanese/Cell cycle control phosphatase"/>
    <property type="match status" value="1"/>
</dbReference>
<dbReference type="PROSITE" id="PS50206">
    <property type="entry name" value="RHODANESE_3"/>
    <property type="match status" value="1"/>
</dbReference>
<gene>
    <name type="primary">STR18</name>
    <name type="ordered locus">At5g66170</name>
    <name type="ORF">K2A18.25</name>
</gene>
<proteinExistence type="evidence at protein level"/>
<accession>Q9FKW8</accession>
<accession>Q8LCX9</accession>
<protein>
    <recommendedName>
        <fullName>Thiosulfate sulfurtransferase 18</fullName>
        <ecNumber>2.8.1.1</ecNumber>
    </recommendedName>
    <alternativeName>
        <fullName>Sulfurtransferase 18</fullName>
        <shortName>AtStr18</shortName>
    </alternativeName>
</protein>
<name>STR18_ARATH</name>
<reference key="1">
    <citation type="journal article" date="1998" name="DNA Res.">
        <title>Structural analysis of Arabidopsis thaliana chromosome 5. V. Sequence features of the regions of 1,381,565 bp covered by twenty one physically assigned P1 and TAC clones.</title>
        <authorList>
            <person name="Kaneko T."/>
            <person name="Kotani H."/>
            <person name="Nakamura Y."/>
            <person name="Sato S."/>
            <person name="Asamizu E."/>
            <person name="Miyajima N."/>
            <person name="Tabata S."/>
        </authorList>
    </citation>
    <scope>NUCLEOTIDE SEQUENCE [LARGE SCALE GENOMIC DNA]</scope>
    <source>
        <strain>cv. Columbia</strain>
    </source>
</reference>
<reference key="2">
    <citation type="journal article" date="2017" name="Plant J.">
        <title>Araport11: a complete reannotation of the Arabidopsis thaliana reference genome.</title>
        <authorList>
            <person name="Cheng C.Y."/>
            <person name="Krishnakumar V."/>
            <person name="Chan A.P."/>
            <person name="Thibaud-Nissen F."/>
            <person name="Schobel S."/>
            <person name="Town C.D."/>
        </authorList>
    </citation>
    <scope>GENOME REANNOTATION</scope>
    <source>
        <strain>cv. Columbia</strain>
    </source>
</reference>
<reference key="3">
    <citation type="journal article" date="2003" name="Science">
        <title>Empirical analysis of transcriptional activity in the Arabidopsis genome.</title>
        <authorList>
            <person name="Yamada K."/>
            <person name="Lim J."/>
            <person name="Dale J.M."/>
            <person name="Chen H."/>
            <person name="Shinn P."/>
            <person name="Palm C.J."/>
            <person name="Southwick A.M."/>
            <person name="Wu H.C."/>
            <person name="Kim C.J."/>
            <person name="Nguyen M."/>
            <person name="Pham P.K."/>
            <person name="Cheuk R.F."/>
            <person name="Karlin-Newmann G."/>
            <person name="Liu S.X."/>
            <person name="Lam B."/>
            <person name="Sakano H."/>
            <person name="Wu T."/>
            <person name="Yu G."/>
            <person name="Miranda M."/>
            <person name="Quach H.L."/>
            <person name="Tripp M."/>
            <person name="Chang C.H."/>
            <person name="Lee J.M."/>
            <person name="Toriumi M.J."/>
            <person name="Chan M.M."/>
            <person name="Tang C.C."/>
            <person name="Onodera C.S."/>
            <person name="Deng J.M."/>
            <person name="Akiyama K."/>
            <person name="Ansari Y."/>
            <person name="Arakawa T."/>
            <person name="Banh J."/>
            <person name="Banno F."/>
            <person name="Bowser L."/>
            <person name="Brooks S.Y."/>
            <person name="Carninci P."/>
            <person name="Chao Q."/>
            <person name="Choy N."/>
            <person name="Enju A."/>
            <person name="Goldsmith A.D."/>
            <person name="Gurjal M."/>
            <person name="Hansen N.F."/>
            <person name="Hayashizaki Y."/>
            <person name="Johnson-Hopson C."/>
            <person name="Hsuan V.W."/>
            <person name="Iida K."/>
            <person name="Karnes M."/>
            <person name="Khan S."/>
            <person name="Koesema E."/>
            <person name="Ishida J."/>
            <person name="Jiang P.X."/>
            <person name="Jones T."/>
            <person name="Kawai J."/>
            <person name="Kamiya A."/>
            <person name="Meyers C."/>
            <person name="Nakajima M."/>
            <person name="Narusaka M."/>
            <person name="Seki M."/>
            <person name="Sakurai T."/>
            <person name="Satou M."/>
            <person name="Tamse R."/>
            <person name="Vaysberg M."/>
            <person name="Wallender E.K."/>
            <person name="Wong C."/>
            <person name="Yamamura Y."/>
            <person name="Yuan S."/>
            <person name="Shinozaki K."/>
            <person name="Davis R.W."/>
            <person name="Theologis A."/>
            <person name="Ecker J.R."/>
        </authorList>
    </citation>
    <scope>NUCLEOTIDE SEQUENCE [LARGE SCALE MRNA]</scope>
    <source>
        <strain>cv. Columbia</strain>
    </source>
</reference>
<reference key="4">
    <citation type="submission" date="2005-03" db="EMBL/GenBank/DDBJ databases">
        <title>Large-scale analysis of RIKEN Arabidopsis full-length (RAFL) cDNAs.</title>
        <authorList>
            <person name="Totoki Y."/>
            <person name="Seki M."/>
            <person name="Ishida J."/>
            <person name="Nakajima M."/>
            <person name="Enju A."/>
            <person name="Kamiya A."/>
            <person name="Narusaka M."/>
            <person name="Shin-i T."/>
            <person name="Nakagawa M."/>
            <person name="Sakamoto N."/>
            <person name="Oishi K."/>
            <person name="Kohara Y."/>
            <person name="Kobayashi M."/>
            <person name="Toyoda A."/>
            <person name="Sakaki Y."/>
            <person name="Sakurai T."/>
            <person name="Iida K."/>
            <person name="Akiyama K."/>
            <person name="Satou M."/>
            <person name="Toyoda T."/>
            <person name="Konagaya A."/>
            <person name="Carninci P."/>
            <person name="Kawai J."/>
            <person name="Hayashizaki Y."/>
            <person name="Shinozaki K."/>
        </authorList>
    </citation>
    <scope>NUCLEOTIDE SEQUENCE [LARGE SCALE MRNA]</scope>
    <source>
        <strain>cv. Columbia</strain>
    </source>
</reference>
<reference key="5">
    <citation type="submission" date="2002-03" db="EMBL/GenBank/DDBJ databases">
        <title>Full-length cDNA from Arabidopsis thaliana.</title>
        <authorList>
            <person name="Brover V.V."/>
            <person name="Troukhan M.E."/>
            <person name="Alexandrov N.A."/>
            <person name="Lu Y.-P."/>
            <person name="Flavell R.B."/>
            <person name="Feldmann K.A."/>
        </authorList>
    </citation>
    <scope>NUCLEOTIDE SEQUENCE [LARGE SCALE MRNA]</scope>
</reference>
<reference key="6">
    <citation type="journal article" date="2002" name="FEBS Lett.">
        <title>Identification and characterization of single-domain thiosulfate sulfurtransferases from Arabidopsis thaliana.</title>
        <authorList>
            <person name="Bauer M."/>
            <person name="Papenbrock J."/>
        </authorList>
    </citation>
    <scope>FUNCTION</scope>
    <scope>CATALYTIC ACTIVITY</scope>
    <scope>BIOPHYSICOCHEMICAL PROPERTIES</scope>
</reference>
<reference key="7">
    <citation type="journal article" date="2004" name="Plant Physiol.">
        <title>Intracellular localization of Arabidopsis sulfurtransferases.</title>
        <authorList>
            <person name="Bauer M."/>
            <person name="Dietrich C."/>
            <person name="Nowak K."/>
            <person name="Sierralta W.D."/>
            <person name="Papenbrock J."/>
        </authorList>
    </citation>
    <scope>SUBCELLULAR LOCATION</scope>
</reference>
<reference key="8">
    <citation type="journal article" date="2007" name="Plant Physiol. Biochem.">
        <title>Differential expression of Arabidopsis sulfurtransferases under various growth conditions.</title>
        <authorList>
            <person name="Bartels A."/>
            <person name="Mock H.P."/>
            <person name="Papenbrock J."/>
        </authorList>
    </citation>
    <scope>GENE FAMILY</scope>
    <scope>NOMENCLATURE</scope>
</reference>
<evidence type="ECO:0000255" key="1">
    <source>
        <dbReference type="PROSITE-ProRule" id="PRU00173"/>
    </source>
</evidence>
<evidence type="ECO:0000269" key="2">
    <source>
    </source>
</evidence>
<evidence type="ECO:0000269" key="3">
    <source>
    </source>
</evidence>
<evidence type="ECO:0000305" key="4"/>
<organism>
    <name type="scientific">Arabidopsis thaliana</name>
    <name type="common">Mouse-ear cress</name>
    <dbReference type="NCBI Taxonomy" id="3702"/>
    <lineage>
        <taxon>Eukaryota</taxon>
        <taxon>Viridiplantae</taxon>
        <taxon>Streptophyta</taxon>
        <taxon>Embryophyta</taxon>
        <taxon>Tracheophyta</taxon>
        <taxon>Spermatophyta</taxon>
        <taxon>Magnoliopsida</taxon>
        <taxon>eudicotyledons</taxon>
        <taxon>Gunneridae</taxon>
        <taxon>Pentapetalae</taxon>
        <taxon>rosids</taxon>
        <taxon>malvids</taxon>
        <taxon>Brassicales</taxon>
        <taxon>Brassicaceae</taxon>
        <taxon>Camelineae</taxon>
        <taxon>Arabidopsis</taxon>
    </lineage>
</organism>
<keyword id="KW-0025">Alternative splicing</keyword>
<keyword id="KW-0963">Cytoplasm</keyword>
<keyword id="KW-1185">Reference proteome</keyword>
<keyword id="KW-0808">Transferase</keyword>
<comment type="function">
    <text evidence="2">Catalyzes the transfer of a sulfur ion from a donor to cyanide or to other thiol compounds. Substrate preference is thiosulfate &gt; 3-mercaptopyruvate.</text>
</comment>
<comment type="catalytic activity">
    <reaction evidence="2">
        <text>thiosulfate + hydrogen cyanide = thiocyanate + sulfite + 2 H(+)</text>
        <dbReference type="Rhea" id="RHEA:16881"/>
        <dbReference type="ChEBI" id="CHEBI:15378"/>
        <dbReference type="ChEBI" id="CHEBI:17359"/>
        <dbReference type="ChEBI" id="CHEBI:18022"/>
        <dbReference type="ChEBI" id="CHEBI:18407"/>
        <dbReference type="ChEBI" id="CHEBI:33542"/>
        <dbReference type="EC" id="2.8.1.1"/>
    </reaction>
</comment>
<comment type="biophysicochemical properties">
    <kinetics>
        <KM evidence="2">1.1 mM for thiosulfate</KM>
        <KM evidence="2">35.4 mM for 3-mercaptopyruvate</KM>
    </kinetics>
</comment>
<comment type="subcellular location">
    <subcellularLocation>
        <location evidence="3">Cytoplasm</location>
    </subcellularLocation>
</comment>
<comment type="alternative products">
    <event type="alternative splicing"/>
    <isoform>
        <id>Q9FKW8-1</id>
        <name>1</name>
        <sequence type="displayed"/>
    </isoform>
    <text>A number of isoforms are produced. According to EST sequences.</text>
</comment>
<sequence length="136" mass="14883">MSQSISSSTKAEEVVSVDVSQAKTLLQSGHQYLDVRTQDEFRRGHCEAAKIVNIPYMLNTPQGRVKNQEFLEQVSSLLNPADDILVGCQSGARSLKATTELVAAGYKKVRNVGGGYLAWVDHSFPINTEEEEPSAN</sequence>